<organism>
    <name type="scientific">Chlamydia pneumoniae</name>
    <name type="common">Chlamydophila pneumoniae</name>
    <dbReference type="NCBI Taxonomy" id="83558"/>
    <lineage>
        <taxon>Bacteria</taxon>
        <taxon>Pseudomonadati</taxon>
        <taxon>Chlamydiota</taxon>
        <taxon>Chlamydiia</taxon>
        <taxon>Chlamydiales</taxon>
        <taxon>Chlamydiaceae</taxon>
        <taxon>Chlamydia/Chlamydophila group</taxon>
        <taxon>Chlamydia</taxon>
    </lineage>
</organism>
<protein>
    <recommendedName>
        <fullName evidence="1">Flavin prenyltransferase UbiX</fullName>
        <ecNumber evidence="1">2.5.1.129</ecNumber>
    </recommendedName>
</protein>
<keyword id="KW-0285">Flavoprotein</keyword>
<keyword id="KW-0288">FMN</keyword>
<keyword id="KW-0637">Prenyltransferase</keyword>
<keyword id="KW-0808">Transferase</keyword>
<gene>
    <name evidence="1" type="primary">ubiX</name>
    <name type="ordered locus">CPn_0264</name>
    <name type="ordered locus">CP_0497</name>
    <name type="ordered locus">CpB0271</name>
</gene>
<feature type="chain" id="PRO_0000134960" description="Flavin prenyltransferase UbiX">
    <location>
        <begin position="1"/>
        <end position="192"/>
    </location>
</feature>
<feature type="binding site" evidence="1">
    <location>
        <begin position="10"/>
        <end position="12"/>
    </location>
    <ligand>
        <name>FMN</name>
        <dbReference type="ChEBI" id="CHEBI:58210"/>
    </ligand>
</feature>
<feature type="binding site" evidence="1">
    <location>
        <position position="36"/>
    </location>
    <ligand>
        <name>FMN</name>
        <dbReference type="ChEBI" id="CHEBI:58210"/>
    </ligand>
</feature>
<feature type="binding site" evidence="1">
    <location>
        <begin position="92"/>
        <end position="95"/>
    </location>
    <ligand>
        <name>FMN</name>
        <dbReference type="ChEBI" id="CHEBI:58210"/>
    </ligand>
</feature>
<feature type="binding site" evidence="1">
    <location>
        <position position="127"/>
    </location>
    <ligand>
        <name>FMN</name>
        <dbReference type="ChEBI" id="CHEBI:58210"/>
    </ligand>
</feature>
<feature type="binding site" evidence="1">
    <location>
        <position position="157"/>
    </location>
    <ligand>
        <name>dimethylallyl phosphate</name>
        <dbReference type="ChEBI" id="CHEBI:88052"/>
    </ligand>
</feature>
<feature type="binding site" evidence="1">
    <location>
        <position position="173"/>
    </location>
    <ligand>
        <name>dimethylallyl phosphate</name>
        <dbReference type="ChEBI" id="CHEBI:88052"/>
    </ligand>
</feature>
<accession>Q9Z8S4</accession>
<dbReference type="EC" id="2.5.1.129" evidence="1"/>
<dbReference type="EMBL" id="AE001363">
    <property type="protein sequence ID" value="AAD18413.1"/>
    <property type="molecule type" value="Genomic_DNA"/>
</dbReference>
<dbReference type="EMBL" id="AE002161">
    <property type="protein sequence ID" value="AAF73678.1"/>
    <property type="molecule type" value="Genomic_DNA"/>
</dbReference>
<dbReference type="EMBL" id="BA000008">
    <property type="protein sequence ID" value="BAA98474.1"/>
    <property type="molecule type" value="Genomic_DNA"/>
</dbReference>
<dbReference type="EMBL" id="AE009440">
    <property type="protein sequence ID" value="AAP98204.1"/>
    <property type="molecule type" value="Genomic_DNA"/>
</dbReference>
<dbReference type="PIR" id="H72099">
    <property type="entry name" value="H72099"/>
</dbReference>
<dbReference type="PIR" id="H86523">
    <property type="entry name" value="H86523"/>
</dbReference>
<dbReference type="RefSeq" id="NP_224469.1">
    <property type="nucleotide sequence ID" value="NC_000922.1"/>
</dbReference>
<dbReference type="RefSeq" id="WP_010882912.1">
    <property type="nucleotide sequence ID" value="NZ_LN847257.1"/>
</dbReference>
<dbReference type="SMR" id="Q9Z8S4"/>
<dbReference type="STRING" id="406984.CPK_ORF00773"/>
<dbReference type="GeneID" id="45050313"/>
<dbReference type="KEGG" id="cpa:CP_0497"/>
<dbReference type="KEGG" id="cpj:ubiD"/>
<dbReference type="KEGG" id="cpn:CPn_0264"/>
<dbReference type="KEGG" id="cpt:CpB0271"/>
<dbReference type="PATRIC" id="fig|115713.3.peg.295"/>
<dbReference type="eggNOG" id="COG0163">
    <property type="taxonomic scope" value="Bacteria"/>
</dbReference>
<dbReference type="HOGENOM" id="CLU_074522_0_1_0"/>
<dbReference type="OrthoDB" id="9781577at2"/>
<dbReference type="Proteomes" id="UP000000583">
    <property type="component" value="Chromosome"/>
</dbReference>
<dbReference type="Proteomes" id="UP000000801">
    <property type="component" value="Chromosome"/>
</dbReference>
<dbReference type="GO" id="GO:0106141">
    <property type="term" value="F:flavin prenyltransferase activity"/>
    <property type="evidence" value="ECO:0007669"/>
    <property type="project" value="UniProtKB-EC"/>
</dbReference>
<dbReference type="Gene3D" id="3.40.50.1950">
    <property type="entry name" value="Flavin prenyltransferase-like"/>
    <property type="match status" value="1"/>
</dbReference>
<dbReference type="HAMAP" id="MF_01984">
    <property type="entry name" value="ubiX_pad"/>
    <property type="match status" value="1"/>
</dbReference>
<dbReference type="InterPro" id="IPR036551">
    <property type="entry name" value="Flavin_trans-like"/>
</dbReference>
<dbReference type="InterPro" id="IPR003382">
    <property type="entry name" value="Flavoprotein"/>
</dbReference>
<dbReference type="InterPro" id="IPR004507">
    <property type="entry name" value="UbiX-like"/>
</dbReference>
<dbReference type="NCBIfam" id="NF004685">
    <property type="entry name" value="PRK06029.1"/>
    <property type="match status" value="1"/>
</dbReference>
<dbReference type="NCBIfam" id="TIGR00421">
    <property type="entry name" value="ubiX_pad"/>
    <property type="match status" value="1"/>
</dbReference>
<dbReference type="Pfam" id="PF02441">
    <property type="entry name" value="Flavoprotein"/>
    <property type="match status" value="1"/>
</dbReference>
<dbReference type="SUPFAM" id="SSF52507">
    <property type="entry name" value="Homo-oligomeric flavin-containing Cys decarboxylases, HFCD"/>
    <property type="match status" value="1"/>
</dbReference>
<evidence type="ECO:0000255" key="1">
    <source>
        <dbReference type="HAMAP-Rule" id="MF_01984"/>
    </source>
</evidence>
<proteinExistence type="inferred from homology"/>
<sequence length="192" mass="21167">MKRYVVGISGASGVILAVKLIKELVNAKHQVEVIISPSGRKTLYYELGCQSFDALFSEENLEYIHTHSIQAIESSLASGSCPVEATIIIPCSMTTVAAISIGLADNLLRRVADVALKERRPLILVPRETPLHTIHLENLLKLSKSGATIFPPMPMWYFKPQSVEDLENALVGKILAYLNIPSDLTKQWSNPE</sequence>
<reference key="1">
    <citation type="journal article" date="1999" name="Nat. Genet.">
        <title>Comparative genomes of Chlamydia pneumoniae and C. trachomatis.</title>
        <authorList>
            <person name="Kalman S."/>
            <person name="Mitchell W.P."/>
            <person name="Marathe R."/>
            <person name="Lammel C.J."/>
            <person name="Fan J."/>
            <person name="Hyman R.W."/>
            <person name="Olinger L."/>
            <person name="Grimwood J."/>
            <person name="Davis R.W."/>
            <person name="Stephens R.S."/>
        </authorList>
    </citation>
    <scope>NUCLEOTIDE SEQUENCE [LARGE SCALE GENOMIC DNA]</scope>
    <source>
        <strain>CWL029</strain>
    </source>
</reference>
<reference key="2">
    <citation type="journal article" date="2000" name="Nucleic Acids Res.">
        <title>Genome sequences of Chlamydia trachomatis MoPn and Chlamydia pneumoniae AR39.</title>
        <authorList>
            <person name="Read T.D."/>
            <person name="Brunham R.C."/>
            <person name="Shen C."/>
            <person name="Gill S.R."/>
            <person name="Heidelberg J.F."/>
            <person name="White O."/>
            <person name="Hickey E.K."/>
            <person name="Peterson J.D."/>
            <person name="Utterback T.R."/>
            <person name="Berry K.J."/>
            <person name="Bass S."/>
            <person name="Linher K.D."/>
            <person name="Weidman J.F."/>
            <person name="Khouri H.M."/>
            <person name="Craven B."/>
            <person name="Bowman C."/>
            <person name="Dodson R.J."/>
            <person name="Gwinn M.L."/>
            <person name="Nelson W.C."/>
            <person name="DeBoy R.T."/>
            <person name="Kolonay J.F."/>
            <person name="McClarty G."/>
            <person name="Salzberg S.L."/>
            <person name="Eisen J.A."/>
            <person name="Fraser C.M."/>
        </authorList>
    </citation>
    <scope>NUCLEOTIDE SEQUENCE [LARGE SCALE GENOMIC DNA]</scope>
    <source>
        <strain>AR39</strain>
    </source>
</reference>
<reference key="3">
    <citation type="journal article" date="2000" name="Nucleic Acids Res.">
        <title>Comparison of whole genome sequences of Chlamydia pneumoniae J138 from Japan and CWL029 from USA.</title>
        <authorList>
            <person name="Shirai M."/>
            <person name="Hirakawa H."/>
            <person name="Kimoto M."/>
            <person name="Tabuchi M."/>
            <person name="Kishi F."/>
            <person name="Ouchi K."/>
            <person name="Shiba T."/>
            <person name="Ishii K."/>
            <person name="Hattori M."/>
            <person name="Kuhara S."/>
            <person name="Nakazawa T."/>
        </authorList>
    </citation>
    <scope>NUCLEOTIDE SEQUENCE [LARGE SCALE GENOMIC DNA]</scope>
    <source>
        <strain>J138</strain>
    </source>
</reference>
<reference key="4">
    <citation type="submission" date="2002-05" db="EMBL/GenBank/DDBJ databases">
        <title>The genome sequence of Chlamydia pneumoniae TW183 and comparison with other Chlamydia strains based on whole genome sequence analysis.</title>
        <authorList>
            <person name="Geng M.M."/>
            <person name="Schuhmacher A."/>
            <person name="Muehldorfer I."/>
            <person name="Bensch K.W."/>
            <person name="Schaefer K.P."/>
            <person name="Schneider S."/>
            <person name="Pohl T."/>
            <person name="Essig A."/>
            <person name="Marre R."/>
            <person name="Melchers K."/>
        </authorList>
    </citation>
    <scope>NUCLEOTIDE SEQUENCE [LARGE SCALE GENOMIC DNA]</scope>
    <source>
        <strain>TW-183</strain>
    </source>
</reference>
<name>UBIX_CHLPN</name>
<comment type="function">
    <text evidence="1">Flavin prenyltransferase that catalyzes the synthesis of the prenylated FMN cofactor (prenyl-FMN) for 4-hydroxy-3-polyprenylbenzoic acid decarboxylase UbiD. The prenyltransferase is metal-independent and links a dimethylallyl moiety from dimethylallyl monophosphate (DMAP) to the flavin N5 and C6 atoms of FMN.</text>
</comment>
<comment type="catalytic activity">
    <reaction evidence="1">
        <text>dimethylallyl phosphate + FMNH2 = prenylated FMNH2 + phosphate</text>
        <dbReference type="Rhea" id="RHEA:37743"/>
        <dbReference type="ChEBI" id="CHEBI:43474"/>
        <dbReference type="ChEBI" id="CHEBI:57618"/>
        <dbReference type="ChEBI" id="CHEBI:87467"/>
        <dbReference type="ChEBI" id="CHEBI:88052"/>
        <dbReference type="EC" id="2.5.1.129"/>
    </reaction>
</comment>
<comment type="similarity">
    <text evidence="1">Belongs to the UbiX/PAD1 family.</text>
</comment>